<dbReference type="EMBL" id="CP000447">
    <property type="protein sequence ID" value="ABI70823.1"/>
    <property type="molecule type" value="Genomic_DNA"/>
</dbReference>
<dbReference type="RefSeq" id="WP_011636444.1">
    <property type="nucleotide sequence ID" value="NC_008345.1"/>
</dbReference>
<dbReference type="SMR" id="Q086J2"/>
<dbReference type="STRING" id="318167.Sfri_0970"/>
<dbReference type="KEGG" id="sfr:Sfri_0970"/>
<dbReference type="eggNOG" id="COG0484">
    <property type="taxonomic scope" value="Bacteria"/>
</dbReference>
<dbReference type="HOGENOM" id="CLU_017633_0_7_6"/>
<dbReference type="OrthoDB" id="9779889at2"/>
<dbReference type="Proteomes" id="UP000000684">
    <property type="component" value="Chromosome"/>
</dbReference>
<dbReference type="GO" id="GO:0005737">
    <property type="term" value="C:cytoplasm"/>
    <property type="evidence" value="ECO:0007669"/>
    <property type="project" value="UniProtKB-SubCell"/>
</dbReference>
<dbReference type="GO" id="GO:0005524">
    <property type="term" value="F:ATP binding"/>
    <property type="evidence" value="ECO:0007669"/>
    <property type="project" value="InterPro"/>
</dbReference>
<dbReference type="GO" id="GO:0031072">
    <property type="term" value="F:heat shock protein binding"/>
    <property type="evidence" value="ECO:0007669"/>
    <property type="project" value="InterPro"/>
</dbReference>
<dbReference type="GO" id="GO:0051082">
    <property type="term" value="F:unfolded protein binding"/>
    <property type="evidence" value="ECO:0007669"/>
    <property type="project" value="UniProtKB-UniRule"/>
</dbReference>
<dbReference type="GO" id="GO:0008270">
    <property type="term" value="F:zinc ion binding"/>
    <property type="evidence" value="ECO:0007669"/>
    <property type="project" value="UniProtKB-UniRule"/>
</dbReference>
<dbReference type="GO" id="GO:0051085">
    <property type="term" value="P:chaperone cofactor-dependent protein refolding"/>
    <property type="evidence" value="ECO:0007669"/>
    <property type="project" value="TreeGrafter"/>
</dbReference>
<dbReference type="GO" id="GO:0006260">
    <property type="term" value="P:DNA replication"/>
    <property type="evidence" value="ECO:0007669"/>
    <property type="project" value="UniProtKB-KW"/>
</dbReference>
<dbReference type="GO" id="GO:0042026">
    <property type="term" value="P:protein refolding"/>
    <property type="evidence" value="ECO:0007669"/>
    <property type="project" value="TreeGrafter"/>
</dbReference>
<dbReference type="GO" id="GO:0009408">
    <property type="term" value="P:response to heat"/>
    <property type="evidence" value="ECO:0007669"/>
    <property type="project" value="InterPro"/>
</dbReference>
<dbReference type="CDD" id="cd06257">
    <property type="entry name" value="DnaJ"/>
    <property type="match status" value="1"/>
</dbReference>
<dbReference type="CDD" id="cd10747">
    <property type="entry name" value="DnaJ_C"/>
    <property type="match status" value="1"/>
</dbReference>
<dbReference type="CDD" id="cd10719">
    <property type="entry name" value="DnaJ_zf"/>
    <property type="match status" value="1"/>
</dbReference>
<dbReference type="FunFam" id="1.10.287.110:FF:000034">
    <property type="entry name" value="Chaperone protein DnaJ"/>
    <property type="match status" value="1"/>
</dbReference>
<dbReference type="FunFam" id="2.10.230.10:FF:000002">
    <property type="entry name" value="Molecular chaperone DnaJ"/>
    <property type="match status" value="1"/>
</dbReference>
<dbReference type="FunFam" id="2.60.260.20:FF:000004">
    <property type="entry name" value="Molecular chaperone DnaJ"/>
    <property type="match status" value="1"/>
</dbReference>
<dbReference type="Gene3D" id="1.10.287.110">
    <property type="entry name" value="DnaJ domain"/>
    <property type="match status" value="1"/>
</dbReference>
<dbReference type="Gene3D" id="2.10.230.10">
    <property type="entry name" value="Heat shock protein DnaJ, cysteine-rich domain"/>
    <property type="match status" value="1"/>
</dbReference>
<dbReference type="Gene3D" id="2.60.260.20">
    <property type="entry name" value="Urease metallochaperone UreE, N-terminal domain"/>
    <property type="match status" value="2"/>
</dbReference>
<dbReference type="HAMAP" id="MF_01152">
    <property type="entry name" value="DnaJ"/>
    <property type="match status" value="1"/>
</dbReference>
<dbReference type="InterPro" id="IPR012724">
    <property type="entry name" value="DnaJ"/>
</dbReference>
<dbReference type="InterPro" id="IPR002939">
    <property type="entry name" value="DnaJ_C"/>
</dbReference>
<dbReference type="InterPro" id="IPR001623">
    <property type="entry name" value="DnaJ_domain"/>
</dbReference>
<dbReference type="InterPro" id="IPR018253">
    <property type="entry name" value="DnaJ_domain_CS"/>
</dbReference>
<dbReference type="InterPro" id="IPR008971">
    <property type="entry name" value="HSP40/DnaJ_pept-bd"/>
</dbReference>
<dbReference type="InterPro" id="IPR001305">
    <property type="entry name" value="HSP_DnaJ_Cys-rich_dom"/>
</dbReference>
<dbReference type="InterPro" id="IPR036410">
    <property type="entry name" value="HSP_DnaJ_Cys-rich_dom_sf"/>
</dbReference>
<dbReference type="InterPro" id="IPR036869">
    <property type="entry name" value="J_dom_sf"/>
</dbReference>
<dbReference type="NCBIfam" id="TIGR02349">
    <property type="entry name" value="DnaJ_bact"/>
    <property type="match status" value="1"/>
</dbReference>
<dbReference type="NCBIfam" id="NF008035">
    <property type="entry name" value="PRK10767.1"/>
    <property type="match status" value="1"/>
</dbReference>
<dbReference type="PANTHER" id="PTHR43096:SF48">
    <property type="entry name" value="CHAPERONE PROTEIN DNAJ"/>
    <property type="match status" value="1"/>
</dbReference>
<dbReference type="PANTHER" id="PTHR43096">
    <property type="entry name" value="DNAJ HOMOLOG 1, MITOCHONDRIAL-RELATED"/>
    <property type="match status" value="1"/>
</dbReference>
<dbReference type="Pfam" id="PF00226">
    <property type="entry name" value="DnaJ"/>
    <property type="match status" value="1"/>
</dbReference>
<dbReference type="Pfam" id="PF01556">
    <property type="entry name" value="DnaJ_C"/>
    <property type="match status" value="1"/>
</dbReference>
<dbReference type="Pfam" id="PF00684">
    <property type="entry name" value="DnaJ_CXXCXGXG"/>
    <property type="match status" value="1"/>
</dbReference>
<dbReference type="PRINTS" id="PR00625">
    <property type="entry name" value="JDOMAIN"/>
</dbReference>
<dbReference type="SMART" id="SM00271">
    <property type="entry name" value="DnaJ"/>
    <property type="match status" value="1"/>
</dbReference>
<dbReference type="SUPFAM" id="SSF46565">
    <property type="entry name" value="Chaperone J-domain"/>
    <property type="match status" value="1"/>
</dbReference>
<dbReference type="SUPFAM" id="SSF57938">
    <property type="entry name" value="DnaJ/Hsp40 cysteine-rich domain"/>
    <property type="match status" value="1"/>
</dbReference>
<dbReference type="SUPFAM" id="SSF49493">
    <property type="entry name" value="HSP40/DnaJ peptide-binding domain"/>
    <property type="match status" value="2"/>
</dbReference>
<dbReference type="PROSITE" id="PS00636">
    <property type="entry name" value="DNAJ_1"/>
    <property type="match status" value="1"/>
</dbReference>
<dbReference type="PROSITE" id="PS50076">
    <property type="entry name" value="DNAJ_2"/>
    <property type="match status" value="1"/>
</dbReference>
<dbReference type="PROSITE" id="PS51188">
    <property type="entry name" value="ZF_CR"/>
    <property type="match status" value="1"/>
</dbReference>
<protein>
    <recommendedName>
        <fullName evidence="1">Chaperone protein DnaJ</fullName>
    </recommendedName>
</protein>
<comment type="function">
    <text evidence="1">Participates actively in the response to hyperosmotic and heat shock by preventing the aggregation of stress-denatured proteins and by disaggregating proteins, also in an autonomous, DnaK-independent fashion. Unfolded proteins bind initially to DnaJ; upon interaction with the DnaJ-bound protein, DnaK hydrolyzes its bound ATP, resulting in the formation of a stable complex. GrpE releases ADP from DnaK; ATP binding to DnaK triggers the release of the substrate protein, thus completing the reaction cycle. Several rounds of ATP-dependent interactions between DnaJ, DnaK and GrpE are required for fully efficient folding. Also involved, together with DnaK and GrpE, in the DNA replication of plasmids through activation of initiation proteins.</text>
</comment>
<comment type="cofactor">
    <cofactor evidence="1">
        <name>Zn(2+)</name>
        <dbReference type="ChEBI" id="CHEBI:29105"/>
    </cofactor>
    <text evidence="1">Binds 2 Zn(2+) ions per monomer.</text>
</comment>
<comment type="subunit">
    <text evidence="1">Homodimer.</text>
</comment>
<comment type="subcellular location">
    <subcellularLocation>
        <location evidence="1">Cytoplasm</location>
    </subcellularLocation>
</comment>
<comment type="domain">
    <text evidence="1">The J domain is necessary and sufficient to stimulate DnaK ATPase activity. Zinc center 1 plays an important role in the autonomous, DnaK-independent chaperone activity of DnaJ. Zinc center 2 is essential for interaction with DnaK and for DnaJ activity.</text>
</comment>
<comment type="similarity">
    <text evidence="1">Belongs to the DnaJ family.</text>
</comment>
<sequence length="376" mass="40727">MSKRDYYEVLGVGRDTSEREIKKAYKRLAMKFHPDRNPGDKAAEASFKEIKEAYEILTDSDKKAAYDQFGHAGVDPNRGGHGGGQGDFGDIFGDVFGDIFGGGRRGGGQRQAARGSDLRYNLELSLEEAVRGLTKELRIPTLAACDLCDGSGAKKGTSATTCGTCHGQGQVQMRQGFFAVQQACPTCHGRGKIIKDPCGKCHGEGRVEKSKTLSVKIPAGVDTGDRIRLTGEGEAGEFGAPPGDLYVQVSVREHAIFTRDANNLYCEVPISFSKAALGGEIEVPTLDGKVSLKIPTETQTGRMFRLRGKGVKSVRSHAVGDLLCKVVMETPVNLNEKQKELLREFEATLTGESKKHSPKAEGFFDGVKKFFQDLNS</sequence>
<reference key="1">
    <citation type="submission" date="2006-08" db="EMBL/GenBank/DDBJ databases">
        <title>Complete sequence of Shewanella frigidimarina NCIMB 400.</title>
        <authorList>
            <consortium name="US DOE Joint Genome Institute"/>
            <person name="Copeland A."/>
            <person name="Lucas S."/>
            <person name="Lapidus A."/>
            <person name="Barry K."/>
            <person name="Detter J.C."/>
            <person name="Glavina del Rio T."/>
            <person name="Hammon N."/>
            <person name="Israni S."/>
            <person name="Dalin E."/>
            <person name="Tice H."/>
            <person name="Pitluck S."/>
            <person name="Fredrickson J.K."/>
            <person name="Kolker E."/>
            <person name="McCuel L.A."/>
            <person name="DiChristina T."/>
            <person name="Nealson K.H."/>
            <person name="Newman D."/>
            <person name="Tiedje J.M."/>
            <person name="Zhou J."/>
            <person name="Romine M.F."/>
            <person name="Culley D.E."/>
            <person name="Serres M."/>
            <person name="Chertkov O."/>
            <person name="Brettin T."/>
            <person name="Bruce D."/>
            <person name="Han C."/>
            <person name="Tapia R."/>
            <person name="Gilna P."/>
            <person name="Schmutz J."/>
            <person name="Larimer F."/>
            <person name="Land M."/>
            <person name="Hauser L."/>
            <person name="Kyrpides N."/>
            <person name="Mikhailova N."/>
            <person name="Richardson P."/>
        </authorList>
    </citation>
    <scope>NUCLEOTIDE SEQUENCE [LARGE SCALE GENOMIC DNA]</scope>
    <source>
        <strain>NCIMB 400</strain>
    </source>
</reference>
<keyword id="KW-0143">Chaperone</keyword>
<keyword id="KW-0963">Cytoplasm</keyword>
<keyword id="KW-0235">DNA replication</keyword>
<keyword id="KW-0479">Metal-binding</keyword>
<keyword id="KW-1185">Reference proteome</keyword>
<keyword id="KW-0677">Repeat</keyword>
<keyword id="KW-0346">Stress response</keyword>
<keyword id="KW-0862">Zinc</keyword>
<keyword id="KW-0863">Zinc-finger</keyword>
<gene>
    <name evidence="1" type="primary">dnaJ</name>
    <name type="ordered locus">Sfri_0970</name>
</gene>
<organism>
    <name type="scientific">Shewanella frigidimarina (strain NCIMB 400)</name>
    <dbReference type="NCBI Taxonomy" id="318167"/>
    <lineage>
        <taxon>Bacteria</taxon>
        <taxon>Pseudomonadati</taxon>
        <taxon>Pseudomonadota</taxon>
        <taxon>Gammaproteobacteria</taxon>
        <taxon>Alteromonadales</taxon>
        <taxon>Shewanellaceae</taxon>
        <taxon>Shewanella</taxon>
    </lineage>
</organism>
<evidence type="ECO:0000255" key="1">
    <source>
        <dbReference type="HAMAP-Rule" id="MF_01152"/>
    </source>
</evidence>
<feature type="chain" id="PRO_1000085291" description="Chaperone protein DnaJ">
    <location>
        <begin position="1"/>
        <end position="376"/>
    </location>
</feature>
<feature type="domain" description="J" evidence="1">
    <location>
        <begin position="5"/>
        <end position="70"/>
    </location>
</feature>
<feature type="repeat" description="CXXCXGXG motif">
    <location>
        <begin position="145"/>
        <end position="152"/>
    </location>
</feature>
<feature type="repeat" description="CXXCXGXG motif">
    <location>
        <begin position="162"/>
        <end position="169"/>
    </location>
</feature>
<feature type="repeat" description="CXXCXGXG motif">
    <location>
        <begin position="184"/>
        <end position="191"/>
    </location>
</feature>
<feature type="repeat" description="CXXCXGXG motif">
    <location>
        <begin position="198"/>
        <end position="205"/>
    </location>
</feature>
<feature type="zinc finger region" description="CR-type" evidence="1">
    <location>
        <begin position="132"/>
        <end position="210"/>
    </location>
</feature>
<feature type="binding site" evidence="1">
    <location>
        <position position="145"/>
    </location>
    <ligand>
        <name>Zn(2+)</name>
        <dbReference type="ChEBI" id="CHEBI:29105"/>
        <label>1</label>
    </ligand>
</feature>
<feature type="binding site" evidence="1">
    <location>
        <position position="148"/>
    </location>
    <ligand>
        <name>Zn(2+)</name>
        <dbReference type="ChEBI" id="CHEBI:29105"/>
        <label>1</label>
    </ligand>
</feature>
<feature type="binding site" evidence="1">
    <location>
        <position position="162"/>
    </location>
    <ligand>
        <name>Zn(2+)</name>
        <dbReference type="ChEBI" id="CHEBI:29105"/>
        <label>2</label>
    </ligand>
</feature>
<feature type="binding site" evidence="1">
    <location>
        <position position="165"/>
    </location>
    <ligand>
        <name>Zn(2+)</name>
        <dbReference type="ChEBI" id="CHEBI:29105"/>
        <label>2</label>
    </ligand>
</feature>
<feature type="binding site" evidence="1">
    <location>
        <position position="184"/>
    </location>
    <ligand>
        <name>Zn(2+)</name>
        <dbReference type="ChEBI" id="CHEBI:29105"/>
        <label>2</label>
    </ligand>
</feature>
<feature type="binding site" evidence="1">
    <location>
        <position position="187"/>
    </location>
    <ligand>
        <name>Zn(2+)</name>
        <dbReference type="ChEBI" id="CHEBI:29105"/>
        <label>2</label>
    </ligand>
</feature>
<feature type="binding site" evidence="1">
    <location>
        <position position="198"/>
    </location>
    <ligand>
        <name>Zn(2+)</name>
        <dbReference type="ChEBI" id="CHEBI:29105"/>
        <label>1</label>
    </ligand>
</feature>
<feature type="binding site" evidence="1">
    <location>
        <position position="201"/>
    </location>
    <ligand>
        <name>Zn(2+)</name>
        <dbReference type="ChEBI" id="CHEBI:29105"/>
        <label>1</label>
    </ligand>
</feature>
<proteinExistence type="inferred from homology"/>
<name>DNAJ_SHEFN</name>
<accession>Q086J2</accession>